<evidence type="ECO:0000250" key="1"/>
<evidence type="ECO:0000250" key="2">
    <source>
        <dbReference type="UniProtKB" id="E2RQ08"/>
    </source>
</evidence>
<evidence type="ECO:0000250" key="3">
    <source>
        <dbReference type="UniProtKB" id="P04843"/>
    </source>
</evidence>
<evidence type="ECO:0000250" key="4">
    <source>
        <dbReference type="UniProtKB" id="Q91YQ5"/>
    </source>
</evidence>
<evidence type="ECO:0000255" key="5"/>
<evidence type="ECO:0000305" key="6"/>
<feature type="signal peptide" evidence="1">
    <location>
        <begin position="1"/>
        <end position="23"/>
    </location>
</feature>
<feature type="chain" id="PRO_0000331255" description="Dolichyl-diphosphooligosaccharide--protein glycosyltransferase subunit 1">
    <location>
        <begin position="24"/>
        <end position="607"/>
    </location>
</feature>
<feature type="topological domain" description="Lumenal" evidence="5">
    <location>
        <begin position="24"/>
        <end position="434"/>
    </location>
</feature>
<feature type="transmembrane region" description="Helical" evidence="5">
    <location>
        <begin position="435"/>
        <end position="455"/>
    </location>
</feature>
<feature type="topological domain" description="Cytoplasmic" evidence="1">
    <location>
        <begin position="456"/>
        <end position="607"/>
    </location>
</feature>
<feature type="modified residue" description="N6-acetyllysine" evidence="3">
    <location>
        <position position="187"/>
    </location>
</feature>
<feature type="modified residue" description="N6-acetyllysine; alternate" evidence="4">
    <location>
        <position position="538"/>
    </location>
</feature>
<feature type="glycosylation site" description="N-linked (GlcNAc...) asparagine" evidence="5">
    <location>
        <position position="299"/>
    </location>
</feature>
<feature type="cross-link" description="Glycyl lysine isopeptide (Lys-Gly) (interchain with G-Cter in SUMO2); alternate" evidence="3">
    <location>
        <position position="538"/>
    </location>
</feature>
<name>RPN1_PONAB</name>
<protein>
    <recommendedName>
        <fullName evidence="3">Dolichyl-diphosphooligosaccharide--protein glycosyltransferase subunit 1</fullName>
    </recommendedName>
    <alternativeName>
        <fullName>Dolichyl-diphosphooligosaccharide--protein glycosyltransferase 67 kDa subunit</fullName>
    </alternativeName>
    <alternativeName>
        <fullName>Ribophorin I</fullName>
        <shortName>RPN-I</shortName>
    </alternativeName>
    <alternativeName>
        <fullName>Ribophorin-1</fullName>
    </alternativeName>
</protein>
<reference key="1">
    <citation type="submission" date="2004-11" db="EMBL/GenBank/DDBJ databases">
        <authorList>
            <consortium name="The German cDNA consortium"/>
        </authorList>
    </citation>
    <scope>NUCLEOTIDE SEQUENCE [LARGE SCALE MRNA]</scope>
    <source>
        <tissue>Kidney</tissue>
    </source>
</reference>
<keyword id="KW-0007">Acetylation</keyword>
<keyword id="KW-0256">Endoplasmic reticulum</keyword>
<keyword id="KW-0325">Glycoprotein</keyword>
<keyword id="KW-1017">Isopeptide bond</keyword>
<keyword id="KW-0472">Membrane</keyword>
<keyword id="KW-1185">Reference proteome</keyword>
<keyword id="KW-0732">Signal</keyword>
<keyword id="KW-0812">Transmembrane</keyword>
<keyword id="KW-1133">Transmembrane helix</keyword>
<keyword id="KW-0832">Ubl conjugation</keyword>
<sequence>MEAPAARLFLLLLLGTWAPAPGSASSEAPPLINEDVKRTVDLSSHLAKVTAEVVLAHLGGGSTSRATSFLLALEPELEARLAHLGVQVKGEDEEENNLEVRETKIKGKSGRFFTVRLPVALDPGAKISVIVETVYTHVLQPYPTQITQSEKQFVVFEGNHYFYSPYPTKTQTMRVKLASRNVESYTKLGNPTRSEDLLDYGPFRDVPAYSQDTFKVHYENNSPFLTITSMTRVIEVSHWGNIAVEENVDLKHTGAVLKGPFSRYDYQRQPDSGISSIRSFKTILPAAAQDVYYRDEIGNVSTSHLLILDDSVEMEIRPRFPLFGGWKTHYIVGYNLPSYEYLYNLGDQYALKMRFVDHVFDEQVIDSLTVKIILPEGAKNIEIDSPYEISRAPDELHYTYLDTFGRPVIVAYKKNLVEQHIQDIVVHYTFNKVLMLQEPLLVVAAFYILFFTVIIYVRLDFSITKDPAAEARMKVACITEQVLTLVNKRIGLYRHFDETVNRYKQSRDISTLNSGKKSLETEHKALTSEIALLQSRLKTEGSDLCDRVSEMQKLDAQVKELVLKSAVEAERLVAGKLKKDTYIENEKLISGKRQELVTKIDHILDAL</sequence>
<dbReference type="EMBL" id="CR857244">
    <property type="protein sequence ID" value="CAH89541.1"/>
    <property type="molecule type" value="mRNA"/>
</dbReference>
<dbReference type="RefSeq" id="NP_001124670.1">
    <property type="nucleotide sequence ID" value="NM_001131198.1"/>
</dbReference>
<dbReference type="SMR" id="Q5RFB6"/>
<dbReference type="FunCoup" id="Q5RFB6">
    <property type="interactions" value="3264"/>
</dbReference>
<dbReference type="STRING" id="9601.ENSPPYP00000015025"/>
<dbReference type="GlyCosmos" id="Q5RFB6">
    <property type="glycosylation" value="1 site, No reported glycans"/>
</dbReference>
<dbReference type="GeneID" id="100171515"/>
<dbReference type="KEGG" id="pon:100171515"/>
<dbReference type="CTD" id="6184"/>
<dbReference type="eggNOG" id="KOG2291">
    <property type="taxonomic scope" value="Eukaryota"/>
</dbReference>
<dbReference type="InParanoid" id="Q5RFB6"/>
<dbReference type="OrthoDB" id="310030at2759"/>
<dbReference type="UniPathway" id="UPA00378"/>
<dbReference type="Proteomes" id="UP000001595">
    <property type="component" value="Unplaced"/>
</dbReference>
<dbReference type="GO" id="GO:0008250">
    <property type="term" value="C:oligosaccharyltransferase complex"/>
    <property type="evidence" value="ECO:0007669"/>
    <property type="project" value="TreeGrafter"/>
</dbReference>
<dbReference type="GO" id="GO:0018279">
    <property type="term" value="P:protein N-linked glycosylation via asparagine"/>
    <property type="evidence" value="ECO:0007669"/>
    <property type="project" value="TreeGrafter"/>
</dbReference>
<dbReference type="InterPro" id="IPR007676">
    <property type="entry name" value="Ribophorin_I"/>
</dbReference>
<dbReference type="PANTHER" id="PTHR21049:SF0">
    <property type="entry name" value="DOLICHYL-DIPHOSPHOOLIGOSACCHARIDE--PROTEIN GLYCOSYLTRANSFERASE SUBUNIT 1"/>
    <property type="match status" value="1"/>
</dbReference>
<dbReference type="PANTHER" id="PTHR21049">
    <property type="entry name" value="RIBOPHORIN I"/>
    <property type="match status" value="1"/>
</dbReference>
<dbReference type="Pfam" id="PF04597">
    <property type="entry name" value="Ribophorin_I"/>
    <property type="match status" value="1"/>
</dbReference>
<accession>Q5RFB6</accession>
<comment type="function">
    <text evidence="2">Subunit of the oligosaccharyl transferase (OST) complex that catalyzes the initial transfer of a defined glycan (Glc(3)Man(9)GlcNAc(2) in eukaryotes) from the lipid carrier dolichol-pyrophosphate to an asparagine residue within an Asn-X-Ser/Thr consensus motif in nascent polypeptide chains, the first step in protein N-glycosylation. N-glycosylation occurs cotranslationally and the complex associates with the Sec61 complex at the channel-forming translocon complex that mediates protein translocation across the endoplasmic reticulum (ER). All subunits are required for a maximal enzyme activity.</text>
</comment>
<comment type="pathway">
    <text evidence="3">Protein modification; protein glycosylation.</text>
</comment>
<comment type="subunit">
    <text evidence="2 4">Component of the oligosaccharyltransferase (OST) complex. OST exists in two different complex forms which contain common core subunits RPN1, RPN2, OST48, OST4, DAD1 and TMEM258, either STT3A or STT3B as catalytic subunits, and form-specific accessory subunits. STT3A complex assembly occurs through the formation of 3 subcomplexes. Subcomplex 1 contains RPN1 and TMEM258, subcomplex 2 contains the STT3A-specific subunits STT3A, DC2/OSTC, and KCP2 as well as the core subunit OST4, and subcomplex 3 contains RPN2, DAD1, and OST48. The STT3A complex can form stable complexes with the Sec61 complex or with both the Sec61 and TRAP complexes (By similarity). Interacts with TMEM35A/NACHO (By similarity).</text>
</comment>
<comment type="subcellular location">
    <subcellularLocation>
        <location evidence="2">Endoplasmic reticulum membrane</location>
        <topology evidence="2">Single-pass type I membrane protein</topology>
    </subcellularLocation>
</comment>
<comment type="PTM">
    <text evidence="3">Ubiquitinated by the ECS(ASB11) complex.</text>
</comment>
<comment type="PTM">
    <text evidence="3">Ufmylated by UFL1 in response to endoplasmic reticulum stress, promoting reticulophagy of endoplasmic reticulum sheets.</text>
</comment>
<comment type="similarity">
    <text evidence="6">Belongs to the OST1 family.</text>
</comment>
<gene>
    <name evidence="3" type="primary">RPN1</name>
</gene>
<proteinExistence type="evidence at transcript level"/>
<organism>
    <name type="scientific">Pongo abelii</name>
    <name type="common">Sumatran orangutan</name>
    <name type="synonym">Pongo pygmaeus abelii</name>
    <dbReference type="NCBI Taxonomy" id="9601"/>
    <lineage>
        <taxon>Eukaryota</taxon>
        <taxon>Metazoa</taxon>
        <taxon>Chordata</taxon>
        <taxon>Craniata</taxon>
        <taxon>Vertebrata</taxon>
        <taxon>Euteleostomi</taxon>
        <taxon>Mammalia</taxon>
        <taxon>Eutheria</taxon>
        <taxon>Euarchontoglires</taxon>
        <taxon>Primates</taxon>
        <taxon>Haplorrhini</taxon>
        <taxon>Catarrhini</taxon>
        <taxon>Hominidae</taxon>
        <taxon>Pongo</taxon>
    </lineage>
</organism>